<comment type="function">
    <text evidence="1">Catalyzes the conversion of dethiobiotin (DTB) to biotin by the insertion of a sulfur atom into dethiobiotin via a radical-based mechanism.</text>
</comment>
<comment type="catalytic activity">
    <reaction evidence="1">
        <text>(4R,5S)-dethiobiotin + (sulfur carrier)-SH + 2 reduced [2Fe-2S]-[ferredoxin] + 2 S-adenosyl-L-methionine = (sulfur carrier)-H + biotin + 2 5'-deoxyadenosine + 2 L-methionine + 2 oxidized [2Fe-2S]-[ferredoxin]</text>
        <dbReference type="Rhea" id="RHEA:22060"/>
        <dbReference type="Rhea" id="RHEA-COMP:10000"/>
        <dbReference type="Rhea" id="RHEA-COMP:10001"/>
        <dbReference type="Rhea" id="RHEA-COMP:14737"/>
        <dbReference type="Rhea" id="RHEA-COMP:14739"/>
        <dbReference type="ChEBI" id="CHEBI:17319"/>
        <dbReference type="ChEBI" id="CHEBI:29917"/>
        <dbReference type="ChEBI" id="CHEBI:33737"/>
        <dbReference type="ChEBI" id="CHEBI:33738"/>
        <dbReference type="ChEBI" id="CHEBI:57586"/>
        <dbReference type="ChEBI" id="CHEBI:57844"/>
        <dbReference type="ChEBI" id="CHEBI:59789"/>
        <dbReference type="ChEBI" id="CHEBI:64428"/>
        <dbReference type="ChEBI" id="CHEBI:149473"/>
        <dbReference type="EC" id="2.8.1.6"/>
    </reaction>
</comment>
<comment type="cofactor">
    <cofactor evidence="1">
        <name>[4Fe-4S] cluster</name>
        <dbReference type="ChEBI" id="CHEBI:49883"/>
    </cofactor>
    <text evidence="1">Binds 1 [4Fe-4S] cluster. The cluster is coordinated with 3 cysteines and an exchangeable S-adenosyl-L-methionine.</text>
</comment>
<comment type="cofactor">
    <cofactor evidence="1">
        <name>[2Fe-2S] cluster</name>
        <dbReference type="ChEBI" id="CHEBI:190135"/>
    </cofactor>
    <text evidence="1">Binds 1 [2Fe-2S] cluster. The cluster is coordinated with 3 cysteines and 1 arginine.</text>
</comment>
<comment type="pathway">
    <text evidence="1">Cofactor biosynthesis; biotin biosynthesis; biotin from 7,8-diaminononanoate: step 2/2.</text>
</comment>
<comment type="subunit">
    <text evidence="1">Homodimer.</text>
</comment>
<comment type="similarity">
    <text evidence="1">Belongs to the radical SAM superfamily. Biotin synthase family.</text>
</comment>
<accession>A9R3C8</accession>
<feature type="chain" id="PRO_0000381724" description="Biotin synthase">
    <location>
        <begin position="1"/>
        <end position="345"/>
    </location>
</feature>
<feature type="domain" description="Radical SAM core" evidence="2">
    <location>
        <begin position="38"/>
        <end position="256"/>
    </location>
</feature>
<feature type="binding site" evidence="1">
    <location>
        <position position="53"/>
    </location>
    <ligand>
        <name>[4Fe-4S] cluster</name>
        <dbReference type="ChEBI" id="CHEBI:49883"/>
        <note>4Fe-4S-S-AdoMet</note>
    </ligand>
</feature>
<feature type="binding site" evidence="1">
    <location>
        <position position="57"/>
    </location>
    <ligand>
        <name>[4Fe-4S] cluster</name>
        <dbReference type="ChEBI" id="CHEBI:49883"/>
        <note>4Fe-4S-S-AdoMet</note>
    </ligand>
</feature>
<feature type="binding site" evidence="1">
    <location>
        <position position="60"/>
    </location>
    <ligand>
        <name>[4Fe-4S] cluster</name>
        <dbReference type="ChEBI" id="CHEBI:49883"/>
        <note>4Fe-4S-S-AdoMet</note>
    </ligand>
</feature>
<feature type="binding site" evidence="1">
    <location>
        <position position="97"/>
    </location>
    <ligand>
        <name>[2Fe-2S] cluster</name>
        <dbReference type="ChEBI" id="CHEBI:190135"/>
    </ligand>
</feature>
<feature type="binding site" evidence="1">
    <location>
        <position position="128"/>
    </location>
    <ligand>
        <name>[2Fe-2S] cluster</name>
        <dbReference type="ChEBI" id="CHEBI:190135"/>
    </ligand>
</feature>
<feature type="binding site" evidence="1">
    <location>
        <position position="188"/>
    </location>
    <ligand>
        <name>[2Fe-2S] cluster</name>
        <dbReference type="ChEBI" id="CHEBI:190135"/>
    </ligand>
</feature>
<feature type="binding site" evidence="1">
    <location>
        <position position="260"/>
    </location>
    <ligand>
        <name>[2Fe-2S] cluster</name>
        <dbReference type="ChEBI" id="CHEBI:190135"/>
    </ligand>
</feature>
<keyword id="KW-0001">2Fe-2S</keyword>
<keyword id="KW-0004">4Fe-4S</keyword>
<keyword id="KW-0093">Biotin biosynthesis</keyword>
<keyword id="KW-0408">Iron</keyword>
<keyword id="KW-0411">Iron-sulfur</keyword>
<keyword id="KW-0479">Metal-binding</keyword>
<keyword id="KW-0949">S-adenosyl-L-methionine</keyword>
<keyword id="KW-0808">Transferase</keyword>
<name>BIOB_YERPG</name>
<gene>
    <name evidence="1" type="primary">bioB</name>
    <name type="ordered locus">YpAngola_A1425</name>
</gene>
<organism>
    <name type="scientific">Yersinia pestis bv. Antiqua (strain Angola)</name>
    <dbReference type="NCBI Taxonomy" id="349746"/>
    <lineage>
        <taxon>Bacteria</taxon>
        <taxon>Pseudomonadati</taxon>
        <taxon>Pseudomonadota</taxon>
        <taxon>Gammaproteobacteria</taxon>
        <taxon>Enterobacterales</taxon>
        <taxon>Yersiniaceae</taxon>
        <taxon>Yersinia</taxon>
    </lineage>
</organism>
<protein>
    <recommendedName>
        <fullName evidence="1">Biotin synthase</fullName>
        <ecNumber evidence="1">2.8.1.6</ecNumber>
    </recommendedName>
</protein>
<dbReference type="EC" id="2.8.1.6" evidence="1"/>
<dbReference type="EMBL" id="CP000901">
    <property type="protein sequence ID" value="ABX85289.1"/>
    <property type="molecule type" value="Genomic_DNA"/>
</dbReference>
<dbReference type="RefSeq" id="WP_002210762.1">
    <property type="nucleotide sequence ID" value="NZ_CP009935.1"/>
</dbReference>
<dbReference type="SMR" id="A9R3C8"/>
<dbReference type="GeneID" id="57977290"/>
<dbReference type="KEGG" id="ypg:YpAngola_A1425"/>
<dbReference type="PATRIC" id="fig|349746.12.peg.2391"/>
<dbReference type="UniPathway" id="UPA00078">
    <property type="reaction ID" value="UER00162"/>
</dbReference>
<dbReference type="GO" id="GO:0051537">
    <property type="term" value="F:2 iron, 2 sulfur cluster binding"/>
    <property type="evidence" value="ECO:0007669"/>
    <property type="project" value="UniProtKB-KW"/>
</dbReference>
<dbReference type="GO" id="GO:0051539">
    <property type="term" value="F:4 iron, 4 sulfur cluster binding"/>
    <property type="evidence" value="ECO:0007669"/>
    <property type="project" value="UniProtKB-KW"/>
</dbReference>
<dbReference type="GO" id="GO:0004076">
    <property type="term" value="F:biotin synthase activity"/>
    <property type="evidence" value="ECO:0007669"/>
    <property type="project" value="UniProtKB-UniRule"/>
</dbReference>
<dbReference type="GO" id="GO:0005506">
    <property type="term" value="F:iron ion binding"/>
    <property type="evidence" value="ECO:0007669"/>
    <property type="project" value="UniProtKB-UniRule"/>
</dbReference>
<dbReference type="GO" id="GO:0009102">
    <property type="term" value="P:biotin biosynthetic process"/>
    <property type="evidence" value="ECO:0007669"/>
    <property type="project" value="UniProtKB-UniRule"/>
</dbReference>
<dbReference type="CDD" id="cd01335">
    <property type="entry name" value="Radical_SAM"/>
    <property type="match status" value="1"/>
</dbReference>
<dbReference type="FunFam" id="3.20.20.70:FF:000011">
    <property type="entry name" value="Biotin synthase"/>
    <property type="match status" value="1"/>
</dbReference>
<dbReference type="Gene3D" id="3.20.20.70">
    <property type="entry name" value="Aldolase class I"/>
    <property type="match status" value="1"/>
</dbReference>
<dbReference type="HAMAP" id="MF_01694">
    <property type="entry name" value="BioB"/>
    <property type="match status" value="1"/>
</dbReference>
<dbReference type="InterPro" id="IPR013785">
    <property type="entry name" value="Aldolase_TIM"/>
</dbReference>
<dbReference type="InterPro" id="IPR010722">
    <property type="entry name" value="BATS_dom"/>
</dbReference>
<dbReference type="InterPro" id="IPR002684">
    <property type="entry name" value="Biotin_synth/BioAB"/>
</dbReference>
<dbReference type="InterPro" id="IPR024177">
    <property type="entry name" value="Biotin_synthase"/>
</dbReference>
<dbReference type="InterPro" id="IPR006638">
    <property type="entry name" value="Elp3/MiaA/NifB-like_rSAM"/>
</dbReference>
<dbReference type="InterPro" id="IPR007197">
    <property type="entry name" value="rSAM"/>
</dbReference>
<dbReference type="NCBIfam" id="TIGR00433">
    <property type="entry name" value="bioB"/>
    <property type="match status" value="1"/>
</dbReference>
<dbReference type="PANTHER" id="PTHR22976">
    <property type="entry name" value="BIOTIN SYNTHASE"/>
    <property type="match status" value="1"/>
</dbReference>
<dbReference type="PANTHER" id="PTHR22976:SF2">
    <property type="entry name" value="BIOTIN SYNTHASE, MITOCHONDRIAL"/>
    <property type="match status" value="1"/>
</dbReference>
<dbReference type="Pfam" id="PF06968">
    <property type="entry name" value="BATS"/>
    <property type="match status" value="1"/>
</dbReference>
<dbReference type="Pfam" id="PF04055">
    <property type="entry name" value="Radical_SAM"/>
    <property type="match status" value="1"/>
</dbReference>
<dbReference type="PIRSF" id="PIRSF001619">
    <property type="entry name" value="Biotin_synth"/>
    <property type="match status" value="1"/>
</dbReference>
<dbReference type="SFLD" id="SFLDF00272">
    <property type="entry name" value="biotin_synthase"/>
    <property type="match status" value="1"/>
</dbReference>
<dbReference type="SFLD" id="SFLDS00029">
    <property type="entry name" value="Radical_SAM"/>
    <property type="match status" value="1"/>
</dbReference>
<dbReference type="SMART" id="SM00876">
    <property type="entry name" value="BATS"/>
    <property type="match status" value="1"/>
</dbReference>
<dbReference type="SMART" id="SM00729">
    <property type="entry name" value="Elp3"/>
    <property type="match status" value="1"/>
</dbReference>
<dbReference type="SUPFAM" id="SSF102114">
    <property type="entry name" value="Radical SAM enzymes"/>
    <property type="match status" value="1"/>
</dbReference>
<dbReference type="PROSITE" id="PS51918">
    <property type="entry name" value="RADICAL_SAM"/>
    <property type="match status" value="1"/>
</dbReference>
<sequence>MATYHHWTVGQALALFDKPLLELLFEAQQVHRQHFDPRQVQVSTLLSIKTGACPEDCKYCPQSSRYKTGLESERLMQVEQVLESAKKAKAAGSTRFCMGAAWKNPHERDMPYLAKMVEGVKALGMETCMTLGSLSKQQAHRLADAGLDYYNHNLDTSPEFYGSIITTRSYQERLDTLNEVRDAGIKVCSGGIVGLGETVRDRAGLLVQLANLPKPPESVPINMLVKVKGTPLENNAEVDAFEFIRTIAVARIMMPSSYVRLSAGREQMNEQTQAMCFMAGANSIFYGCKLLTTPNPDEDKDLQLFRKLGLNPQQTATSHGDREQQQALTEQLLHGDTAQFYNAAV</sequence>
<proteinExistence type="inferred from homology"/>
<evidence type="ECO:0000255" key="1">
    <source>
        <dbReference type="HAMAP-Rule" id="MF_01694"/>
    </source>
</evidence>
<evidence type="ECO:0000255" key="2">
    <source>
        <dbReference type="PROSITE-ProRule" id="PRU01266"/>
    </source>
</evidence>
<reference key="1">
    <citation type="journal article" date="2010" name="J. Bacteriol.">
        <title>Genome sequence of the deep-rooted Yersinia pestis strain Angola reveals new insights into the evolution and pangenome of the plague bacterium.</title>
        <authorList>
            <person name="Eppinger M."/>
            <person name="Worsham P.L."/>
            <person name="Nikolich M.P."/>
            <person name="Riley D.R."/>
            <person name="Sebastian Y."/>
            <person name="Mou S."/>
            <person name="Achtman M."/>
            <person name="Lindler L.E."/>
            <person name="Ravel J."/>
        </authorList>
    </citation>
    <scope>NUCLEOTIDE SEQUENCE [LARGE SCALE GENOMIC DNA]</scope>
    <source>
        <strain>Angola</strain>
    </source>
</reference>